<name>TONB_VIBCH</name>
<gene>
    <name type="primary">tonB</name>
    <name type="ordered locus">VC_A0910</name>
</gene>
<sequence>MNLNRYVIAGGLSLAFHALLLITTDEAQVFAMPAGNPTQSVSINMVSMPKVAPAQPEQTQTEQSKPESVKPTPVQEVVKTPPAKPKVKPHKPKPQTVKKPVPAEQVPSKSVAKPQPEKVERTAETAQKPAPTPNQQPSQPTAASQGITSQPILVDKPALVSAQVQPRYPRIARKRGIEGTVMYEIWLDAQGNQIKQQLLSSSGTEALDQSALEAIKQWKFSPHILDGVPVAHRIHIPIRFKLEG</sequence>
<keyword id="KW-0997">Cell inner membrane</keyword>
<keyword id="KW-1003">Cell membrane</keyword>
<keyword id="KW-0472">Membrane</keyword>
<keyword id="KW-0653">Protein transport</keyword>
<keyword id="KW-1185">Reference proteome</keyword>
<keyword id="KW-0735">Signal-anchor</keyword>
<keyword id="KW-0812">Transmembrane</keyword>
<keyword id="KW-1133">Transmembrane helix</keyword>
<keyword id="KW-0813">Transport</keyword>
<evidence type="ECO:0000250" key="1"/>
<evidence type="ECO:0000255" key="2"/>
<evidence type="ECO:0000255" key="3">
    <source>
        <dbReference type="PROSITE-ProRule" id="PRU01359"/>
    </source>
</evidence>
<evidence type="ECO:0000256" key="4">
    <source>
        <dbReference type="SAM" id="MobiDB-lite"/>
    </source>
</evidence>
<evidence type="ECO:0000305" key="5"/>
<proteinExistence type="inferred from homology"/>
<feature type="chain" id="PRO_0000196211" description="Protein TonB">
    <location>
        <begin position="1"/>
        <end position="244"/>
    </location>
</feature>
<feature type="topological domain" description="Cytoplasmic" evidence="2">
    <location>
        <begin position="1"/>
        <end position="6"/>
    </location>
</feature>
<feature type="transmembrane region" description="Helical; Signal-anchor" evidence="2">
    <location>
        <begin position="7"/>
        <end position="23"/>
    </location>
</feature>
<feature type="topological domain" description="Periplasmic" evidence="2">
    <location>
        <begin position="24"/>
        <end position="244"/>
    </location>
</feature>
<feature type="domain" description="TonB C-terminal" evidence="3">
    <location>
        <begin position="153"/>
        <end position="244"/>
    </location>
</feature>
<feature type="region of interest" description="Disordered" evidence="4">
    <location>
        <begin position="51"/>
        <end position="146"/>
    </location>
</feature>
<feature type="compositionally biased region" description="Polar residues" evidence="4">
    <location>
        <begin position="133"/>
        <end position="146"/>
    </location>
</feature>
<feature type="sequence conflict" description="In Ref. 1; AAB94544." evidence="5" ref="1">
    <original>P</original>
    <variation>L</variation>
    <location>
        <position position="66"/>
    </location>
</feature>
<feature type="sequence conflict" description="In Ref. 1; AAB94544." evidence="5" ref="1">
    <original>K</original>
    <variation>E</variation>
    <location>
        <position position="88"/>
    </location>
</feature>
<feature type="sequence conflict" description="In Ref. 1; AAB94544." evidence="5" ref="1">
    <original>T</original>
    <variation>M</variation>
    <location>
        <position position="125"/>
    </location>
</feature>
<dbReference type="EMBL" id="AF016580">
    <property type="protein sequence ID" value="AAB94544.1"/>
    <property type="molecule type" value="Genomic_DNA"/>
</dbReference>
<dbReference type="EMBL" id="AE003853">
    <property type="protein sequence ID" value="AAF96807.1"/>
    <property type="status" value="ALT_INIT"/>
    <property type="molecule type" value="Genomic_DNA"/>
</dbReference>
<dbReference type="PIR" id="B82400">
    <property type="entry name" value="B82400"/>
</dbReference>
<dbReference type="RefSeq" id="NP_233295.1">
    <property type="nucleotide sequence ID" value="NC_002506.1"/>
</dbReference>
<dbReference type="RefSeq" id="WP_001052693.1">
    <property type="nucleotide sequence ID" value="NZ_LT906615.1"/>
</dbReference>
<dbReference type="SMR" id="O52042"/>
<dbReference type="STRING" id="243277.VC_A0910"/>
<dbReference type="DNASU" id="2612226"/>
<dbReference type="EnsemblBacteria" id="AAF96807">
    <property type="protein sequence ID" value="AAF96807"/>
    <property type="gene ID" value="VC_A0910"/>
</dbReference>
<dbReference type="KEGG" id="vch:VC_A0910"/>
<dbReference type="PATRIC" id="fig|243277.26.peg.3525"/>
<dbReference type="eggNOG" id="COG0810">
    <property type="taxonomic scope" value="Bacteria"/>
</dbReference>
<dbReference type="HOGENOM" id="CLU_076057_3_0_6"/>
<dbReference type="Proteomes" id="UP000000584">
    <property type="component" value="Chromosome 2"/>
</dbReference>
<dbReference type="GO" id="GO:0030288">
    <property type="term" value="C:outer membrane-bounded periplasmic space"/>
    <property type="evidence" value="ECO:0007669"/>
    <property type="project" value="InterPro"/>
</dbReference>
<dbReference type="GO" id="GO:0098797">
    <property type="term" value="C:plasma membrane protein complex"/>
    <property type="evidence" value="ECO:0000318"/>
    <property type="project" value="GO_Central"/>
</dbReference>
<dbReference type="GO" id="GO:0031992">
    <property type="term" value="F:energy transducer activity"/>
    <property type="evidence" value="ECO:0000318"/>
    <property type="project" value="GO_Central"/>
</dbReference>
<dbReference type="GO" id="GO:0015031">
    <property type="term" value="P:protein transport"/>
    <property type="evidence" value="ECO:0007669"/>
    <property type="project" value="UniProtKB-KW"/>
</dbReference>
<dbReference type="GO" id="GO:0015891">
    <property type="term" value="P:siderophore transport"/>
    <property type="evidence" value="ECO:0007669"/>
    <property type="project" value="InterPro"/>
</dbReference>
<dbReference type="GO" id="GO:0055085">
    <property type="term" value="P:transmembrane transport"/>
    <property type="evidence" value="ECO:0007669"/>
    <property type="project" value="InterPro"/>
</dbReference>
<dbReference type="Gene3D" id="3.30.1150.10">
    <property type="match status" value="1"/>
</dbReference>
<dbReference type="InterPro" id="IPR003538">
    <property type="entry name" value="TonB"/>
</dbReference>
<dbReference type="InterPro" id="IPR051045">
    <property type="entry name" value="TonB-dependent_transducer"/>
</dbReference>
<dbReference type="InterPro" id="IPR006260">
    <property type="entry name" value="TonB/TolA_C"/>
</dbReference>
<dbReference type="InterPro" id="IPR037682">
    <property type="entry name" value="TonB_C"/>
</dbReference>
<dbReference type="NCBIfam" id="TIGR01352">
    <property type="entry name" value="tonB_Cterm"/>
    <property type="match status" value="1"/>
</dbReference>
<dbReference type="PANTHER" id="PTHR33446:SF2">
    <property type="entry name" value="PROTEIN TONB"/>
    <property type="match status" value="1"/>
</dbReference>
<dbReference type="PANTHER" id="PTHR33446">
    <property type="entry name" value="PROTEIN TONB-RELATED"/>
    <property type="match status" value="1"/>
</dbReference>
<dbReference type="Pfam" id="PF03544">
    <property type="entry name" value="TonB_C"/>
    <property type="match status" value="1"/>
</dbReference>
<dbReference type="PRINTS" id="PR01374">
    <property type="entry name" value="TONBPROTEIN"/>
</dbReference>
<dbReference type="SUPFAM" id="SSF74653">
    <property type="entry name" value="TolA/TonB C-terminal domain"/>
    <property type="match status" value="1"/>
</dbReference>
<dbReference type="PROSITE" id="PS52015">
    <property type="entry name" value="TONB_CTD"/>
    <property type="match status" value="1"/>
</dbReference>
<reference key="1">
    <citation type="journal article" date="1998" name="Mol. Microbiol.">
        <title>Vibrio cholerae iron transport: haem transport genes are linked to one of two sets of tonB, exbB, exbD genes.</title>
        <authorList>
            <person name="Occhino D.A."/>
            <person name="Wyckoff E.E."/>
            <person name="Henderson D.P."/>
            <person name="Wrona T.J."/>
            <person name="Payne S.M."/>
        </authorList>
    </citation>
    <scope>NUCLEOTIDE SEQUENCE [GENOMIC DNA]</scope>
    <source>
        <strain>Classical CA401</strain>
    </source>
</reference>
<reference key="2">
    <citation type="journal article" date="2000" name="Nature">
        <title>DNA sequence of both chromosomes of the cholera pathogen Vibrio cholerae.</title>
        <authorList>
            <person name="Heidelberg J.F."/>
            <person name="Eisen J.A."/>
            <person name="Nelson W.C."/>
            <person name="Clayton R.A."/>
            <person name="Gwinn M.L."/>
            <person name="Dodson R.J."/>
            <person name="Haft D.H."/>
            <person name="Hickey E.K."/>
            <person name="Peterson J.D."/>
            <person name="Umayam L.A."/>
            <person name="Gill S.R."/>
            <person name="Nelson K.E."/>
            <person name="Read T.D."/>
            <person name="Tettelin H."/>
            <person name="Richardson D.L."/>
            <person name="Ermolaeva M.D."/>
            <person name="Vamathevan J.J."/>
            <person name="Bass S."/>
            <person name="Qin H."/>
            <person name="Dragoi I."/>
            <person name="Sellers P."/>
            <person name="McDonald L.A."/>
            <person name="Utterback T.R."/>
            <person name="Fleischmann R.D."/>
            <person name="Nierman W.C."/>
            <person name="White O."/>
            <person name="Salzberg S.L."/>
            <person name="Smith H.O."/>
            <person name="Colwell R.R."/>
            <person name="Mekalanos J.J."/>
            <person name="Venter J.C."/>
            <person name="Fraser C.M."/>
        </authorList>
    </citation>
    <scope>NUCLEOTIDE SEQUENCE [LARGE SCALE GENOMIC DNA]</scope>
    <source>
        <strain>ATCC 39315 / El Tor Inaba N16961</strain>
    </source>
</reference>
<comment type="function">
    <text evidence="1">Interacts with outer membrane receptor proteins that carry out high-affinity binding and energy dependent uptake into the periplasmic space of specific substrates. It could act to transduce energy from the cytoplasmic membrane to specific energy-requiring processes in the outer membrane, resulting in the release into the periplasm of ligands bound by these outer membrane proteins (By similarity).</text>
</comment>
<comment type="subunit">
    <text evidence="1">Homodimer. Forms a complex with the accessory proteins ExbB and ExbD (By similarity).</text>
</comment>
<comment type="subcellular location">
    <subcellularLocation>
        <location evidence="1">Cell inner membrane</location>
        <topology evidence="1">Single-pass membrane protein</topology>
        <orientation evidence="1">Periplasmic side</orientation>
    </subcellularLocation>
</comment>
<comment type="similarity">
    <text evidence="5">Belongs to the TonB family.</text>
</comment>
<comment type="sequence caution" evidence="5">
    <conflict type="erroneous initiation">
        <sequence resource="EMBL-CDS" id="AAF96807"/>
    </conflict>
</comment>
<accession>O52042</accession>
<accession>Q9KL38</accession>
<organism>
    <name type="scientific">Vibrio cholerae serotype O1 (strain ATCC 39315 / El Tor Inaba N16961)</name>
    <dbReference type="NCBI Taxonomy" id="243277"/>
    <lineage>
        <taxon>Bacteria</taxon>
        <taxon>Pseudomonadati</taxon>
        <taxon>Pseudomonadota</taxon>
        <taxon>Gammaproteobacteria</taxon>
        <taxon>Vibrionales</taxon>
        <taxon>Vibrionaceae</taxon>
        <taxon>Vibrio</taxon>
    </lineage>
</organism>
<protein>
    <recommendedName>
        <fullName>Protein TonB</fullName>
    </recommendedName>
</protein>